<gene>
    <name evidence="2" type="primary">ACSBG2</name>
    <name type="ORF">RCJMB04_9i11</name>
</gene>
<dbReference type="EC" id="6.2.1.3" evidence="2"/>
<dbReference type="EC" id="6.2.1.15" evidence="2"/>
<dbReference type="EMBL" id="AJ720017">
    <property type="protein sequence ID" value="CAG31676.1"/>
    <property type="status" value="ALT_INIT"/>
    <property type="molecule type" value="mRNA"/>
</dbReference>
<dbReference type="SMR" id="Q5ZKR7"/>
<dbReference type="FunCoup" id="Q5ZKR7">
    <property type="interactions" value="34"/>
</dbReference>
<dbReference type="STRING" id="9031.ENSGALP00000045078"/>
<dbReference type="PaxDb" id="9031-ENSGALP00000040940"/>
<dbReference type="VEuPathDB" id="HostDB:geneid_420090"/>
<dbReference type="eggNOG" id="KOG1256">
    <property type="taxonomic scope" value="Eukaryota"/>
</dbReference>
<dbReference type="InParanoid" id="Q5ZKR7"/>
<dbReference type="OrthoDB" id="3633556at2759"/>
<dbReference type="PhylomeDB" id="Q5ZKR7"/>
<dbReference type="Proteomes" id="UP000000539">
    <property type="component" value="Unassembled WGS sequence"/>
</dbReference>
<dbReference type="GO" id="GO:0005783">
    <property type="term" value="C:endoplasmic reticulum"/>
    <property type="evidence" value="ECO:0000318"/>
    <property type="project" value="GO_Central"/>
</dbReference>
<dbReference type="GO" id="GO:0016020">
    <property type="term" value="C:membrane"/>
    <property type="evidence" value="ECO:0000318"/>
    <property type="project" value="GO_Central"/>
</dbReference>
<dbReference type="GO" id="GO:0047676">
    <property type="term" value="F:arachidonate-CoA ligase activity"/>
    <property type="evidence" value="ECO:0000250"/>
    <property type="project" value="UniProtKB"/>
</dbReference>
<dbReference type="GO" id="GO:0005524">
    <property type="term" value="F:ATP binding"/>
    <property type="evidence" value="ECO:0007669"/>
    <property type="project" value="UniProtKB-KW"/>
</dbReference>
<dbReference type="GO" id="GO:0004467">
    <property type="term" value="F:long-chain fatty acid-CoA ligase activity"/>
    <property type="evidence" value="ECO:0000250"/>
    <property type="project" value="UniProtKB"/>
</dbReference>
<dbReference type="CDD" id="cd05933">
    <property type="entry name" value="ACSBG_like"/>
    <property type="match status" value="1"/>
</dbReference>
<dbReference type="Gene3D" id="3.40.50.12780">
    <property type="entry name" value="N-terminal domain of ligase-like"/>
    <property type="match status" value="1"/>
</dbReference>
<dbReference type="InterPro" id="IPR020845">
    <property type="entry name" value="AMP-binding_CS"/>
</dbReference>
<dbReference type="InterPro" id="IPR000873">
    <property type="entry name" value="AMP-dep_synth/lig_dom"/>
</dbReference>
<dbReference type="InterPro" id="IPR042099">
    <property type="entry name" value="ANL_N_sf"/>
</dbReference>
<dbReference type="PANTHER" id="PTHR43272:SF101">
    <property type="entry name" value="ACYL-COA SYNTHETASE BUBBLEGUM FAMILY MEMBER 2-RELATED"/>
    <property type="match status" value="1"/>
</dbReference>
<dbReference type="PANTHER" id="PTHR43272">
    <property type="entry name" value="LONG-CHAIN-FATTY-ACID--COA LIGASE"/>
    <property type="match status" value="1"/>
</dbReference>
<dbReference type="Pfam" id="PF00501">
    <property type="entry name" value="AMP-binding"/>
    <property type="match status" value="1"/>
</dbReference>
<dbReference type="Pfam" id="PF23562">
    <property type="entry name" value="AMP-binding_C_3"/>
    <property type="match status" value="1"/>
</dbReference>
<dbReference type="SUPFAM" id="SSF56801">
    <property type="entry name" value="Acetyl-CoA synthetase-like"/>
    <property type="match status" value="1"/>
</dbReference>
<dbReference type="PROSITE" id="PS00455">
    <property type="entry name" value="AMP_BINDING"/>
    <property type="match status" value="1"/>
</dbReference>
<name>ACBG2_CHICK</name>
<sequence>MLCESEARSTLADPVPMAYLSVDAQGSSEVSLDDITINSSAGTVEVCSMKPADDPKTERSQMNKTGLASSSRPASNVWTTQQDGEVKLRMDEEGMGSEAPKTVHEVFQEAVSKYGDYYALASKKNGQWVKLTYKMYYDKCWKAAKSFLKLVLERFHGVCILGFNSPEWFIADIGAIFAGGLAVGIYTTNSPEACHYVAENCSANILVVENHTQACRKSLEIEHKLPHMKAIIQYGEELKEKRPNQYSWREFLDLGEDIPDSQLREIIESQKPNQCCTLIYTSGTTGQPKGVMLSHDNLTWTSIAAGRSLMLLEATEKQELVVSYLPLSHVAAQMIDIWLPVTFGGQVFFAQPDALKGTLVDTLREVRPTAFLGVPRVWEKIEEKMKSVGAKSSTLRRKVASWAKGVGLQTNLKWMNGHSEVPMNFRLARQLVYKKVRKAIGLDRCTKCFTGAAPISRETLEFFLSLNIPVFELYGMSESSGPHTVSIPQAFRLTSCGKEMAGCRTLIHKPDADGIGEICFAGRHIFMGYLNMEEKTKEAIDKDGWLHSGDLGKCDKDGFIYITGRIKELIITAGGENVPPVPIEDAVKEACPIISNAMLVGDKAKFLAMLLTLKCIINTESGEPGDDLTAEAIEYCQKLGSKATKVSEIISSKDKAVYAAIQAAVSEVNKRAVSNAQKIQKWVVLEKDFSVGGGELGPTMKLKRPVVAQKYKDLIDEFYADANTPTTTEERTSAVMWGGRKLPLVHSIVSLGSLQQIQRVLQK</sequence>
<reference key="1">
    <citation type="journal article" date="2005" name="Genome Biol.">
        <title>Full-length cDNAs from chicken bursal lymphocytes to facilitate gene function analysis.</title>
        <authorList>
            <person name="Caldwell R.B."/>
            <person name="Kierzek A.M."/>
            <person name="Arakawa H."/>
            <person name="Bezzubov Y."/>
            <person name="Zaim J."/>
            <person name="Fiedler P."/>
            <person name="Kutter S."/>
            <person name="Blagodatski A."/>
            <person name="Kostovska D."/>
            <person name="Koter M."/>
            <person name="Plachy J."/>
            <person name="Carninci P."/>
            <person name="Hayashizaki Y."/>
            <person name="Buerstedde J.-M."/>
        </authorList>
    </citation>
    <scope>NUCLEOTIDE SEQUENCE [LARGE SCALE MRNA]</scope>
    <source>
        <strain>CB</strain>
        <tissue>Bursa of Fabricius</tissue>
    </source>
</reference>
<proteinExistence type="evidence at transcript level"/>
<keyword id="KW-0067">ATP-binding</keyword>
<keyword id="KW-0963">Cytoplasm</keyword>
<keyword id="KW-0276">Fatty acid metabolism</keyword>
<keyword id="KW-0436">Ligase</keyword>
<keyword id="KW-0443">Lipid metabolism</keyword>
<keyword id="KW-0547">Nucleotide-binding</keyword>
<keyword id="KW-1185">Reference proteome</keyword>
<feature type="chain" id="PRO_0000315815" description="Long-chain-fatty-acid--CoA ligase ACSBG2">
    <location>
        <begin position="1"/>
        <end position="763"/>
    </location>
</feature>
<feature type="region of interest" description="Disordered" evidence="3">
    <location>
        <begin position="47"/>
        <end position="78"/>
    </location>
</feature>
<feature type="compositionally biased region" description="Basic and acidic residues" evidence="3">
    <location>
        <begin position="51"/>
        <end position="61"/>
    </location>
</feature>
<feature type="compositionally biased region" description="Polar residues" evidence="3">
    <location>
        <begin position="62"/>
        <end position="78"/>
    </location>
</feature>
<feature type="binding site" evidence="1">
    <location>
        <begin position="281"/>
        <end position="289"/>
    </location>
    <ligand>
        <name>ATP</name>
        <dbReference type="ChEBI" id="CHEBI:30616"/>
    </ligand>
</feature>
<feature type="binding site" evidence="1">
    <location>
        <begin position="472"/>
        <end position="477"/>
    </location>
    <ligand>
        <name>ATP</name>
        <dbReference type="ChEBI" id="CHEBI:30616"/>
    </ligand>
</feature>
<feature type="binding site" evidence="1">
    <location>
        <position position="550"/>
    </location>
    <ligand>
        <name>ATP</name>
        <dbReference type="ChEBI" id="CHEBI:30616"/>
    </ligand>
</feature>
<feature type="binding site" evidence="1">
    <location>
        <position position="565"/>
    </location>
    <ligand>
        <name>ATP</name>
        <dbReference type="ChEBI" id="CHEBI:30616"/>
    </ligand>
</feature>
<feature type="binding site" evidence="1">
    <location>
        <position position="678"/>
    </location>
    <ligand>
        <name>ATP</name>
        <dbReference type="ChEBI" id="CHEBI:30616"/>
    </ligand>
</feature>
<protein>
    <recommendedName>
        <fullName evidence="2">Long-chain-fatty-acid--CoA ligase ACSBG2</fullName>
        <ecNumber evidence="2">6.2.1.3</ecNumber>
    </recommendedName>
    <alternativeName>
        <fullName>Acyl-CoA synthetase bubblegum family member 2</fullName>
    </alternativeName>
    <alternativeName>
        <fullName evidence="2">Arachidonate--CoA ligase ACSBG2</fullName>
        <ecNumber evidence="2">6.2.1.15</ecNumber>
    </alternativeName>
</protein>
<evidence type="ECO:0000250" key="1"/>
<evidence type="ECO:0000250" key="2">
    <source>
        <dbReference type="UniProtKB" id="Q5FVE4"/>
    </source>
</evidence>
<evidence type="ECO:0000256" key="3">
    <source>
        <dbReference type="SAM" id="MobiDB-lite"/>
    </source>
</evidence>
<evidence type="ECO:0000305" key="4"/>
<accession>Q5ZKR7</accession>
<comment type="function">
    <text evidence="1">Mediates activation of long-chain fatty acids for both synthesis of cellular lipids, and degradation via beta-oxidation.</text>
</comment>
<comment type="function">
    <text evidence="2">Catalyzes the conversion of fatty acids such as long chain and very long-chain fatty acids to their active form acyl-CoAs for both synthesis of cellular lipids, and degradation via beta-oxidation. Can activate diverse saturated, monosaturated and polyunsaturated fatty acids.</text>
</comment>
<comment type="catalytic activity">
    <reaction evidence="2">
        <text>a long-chain fatty acid + ATP + CoA = a long-chain fatty acyl-CoA + AMP + diphosphate</text>
        <dbReference type="Rhea" id="RHEA:15421"/>
        <dbReference type="ChEBI" id="CHEBI:30616"/>
        <dbReference type="ChEBI" id="CHEBI:33019"/>
        <dbReference type="ChEBI" id="CHEBI:57287"/>
        <dbReference type="ChEBI" id="CHEBI:57560"/>
        <dbReference type="ChEBI" id="CHEBI:83139"/>
        <dbReference type="ChEBI" id="CHEBI:456215"/>
        <dbReference type="EC" id="6.2.1.3"/>
    </reaction>
    <physiologicalReaction direction="left-to-right" evidence="2">
        <dbReference type="Rhea" id="RHEA:15422"/>
    </physiologicalReaction>
</comment>
<comment type="catalytic activity">
    <reaction evidence="2">
        <text>(5Z,8Z,11Z,14Z)-eicosatetraenoate + ATP + CoA = (5Z,8Z,11Z,14Z)-eicosatetraenoyl-CoA + AMP + diphosphate</text>
        <dbReference type="Rhea" id="RHEA:19713"/>
        <dbReference type="ChEBI" id="CHEBI:30616"/>
        <dbReference type="ChEBI" id="CHEBI:32395"/>
        <dbReference type="ChEBI" id="CHEBI:33019"/>
        <dbReference type="ChEBI" id="CHEBI:57287"/>
        <dbReference type="ChEBI" id="CHEBI:57368"/>
        <dbReference type="ChEBI" id="CHEBI:456215"/>
        <dbReference type="EC" id="6.2.1.15"/>
    </reaction>
    <physiologicalReaction direction="left-to-right" evidence="2">
        <dbReference type="Rhea" id="RHEA:19714"/>
    </physiologicalReaction>
</comment>
<comment type="catalytic activity">
    <reaction evidence="2">
        <text>hexadecanoate + ATP + CoA = hexadecanoyl-CoA + AMP + diphosphate</text>
        <dbReference type="Rhea" id="RHEA:30751"/>
        <dbReference type="ChEBI" id="CHEBI:7896"/>
        <dbReference type="ChEBI" id="CHEBI:30616"/>
        <dbReference type="ChEBI" id="CHEBI:33019"/>
        <dbReference type="ChEBI" id="CHEBI:57287"/>
        <dbReference type="ChEBI" id="CHEBI:57379"/>
        <dbReference type="ChEBI" id="CHEBI:456215"/>
    </reaction>
    <physiologicalReaction direction="left-to-right" evidence="2">
        <dbReference type="Rhea" id="RHEA:30752"/>
    </physiologicalReaction>
</comment>
<comment type="catalytic activity">
    <reaction evidence="2">
        <text>(9Z)-octadecenoate + ATP + CoA = (9Z)-octadecenoyl-CoA + AMP + diphosphate</text>
        <dbReference type="Rhea" id="RHEA:33607"/>
        <dbReference type="ChEBI" id="CHEBI:30616"/>
        <dbReference type="ChEBI" id="CHEBI:30823"/>
        <dbReference type="ChEBI" id="CHEBI:33019"/>
        <dbReference type="ChEBI" id="CHEBI:57287"/>
        <dbReference type="ChEBI" id="CHEBI:57387"/>
        <dbReference type="ChEBI" id="CHEBI:456215"/>
    </reaction>
    <physiologicalReaction direction="left-to-right" evidence="2">
        <dbReference type="Rhea" id="RHEA:33608"/>
    </physiologicalReaction>
</comment>
<comment type="catalytic activity">
    <reaction evidence="2">
        <text>(9Z,12Z)-octadecadienoate + ATP + CoA = (9Z,12Z)-octadecadienoyl-CoA + AMP + diphosphate</text>
        <dbReference type="Rhea" id="RHEA:33651"/>
        <dbReference type="ChEBI" id="CHEBI:30245"/>
        <dbReference type="ChEBI" id="CHEBI:30616"/>
        <dbReference type="ChEBI" id="CHEBI:33019"/>
        <dbReference type="ChEBI" id="CHEBI:57287"/>
        <dbReference type="ChEBI" id="CHEBI:57383"/>
        <dbReference type="ChEBI" id="CHEBI:456215"/>
    </reaction>
    <physiologicalReaction direction="left-to-right" evidence="2">
        <dbReference type="Rhea" id="RHEA:33652"/>
    </physiologicalReaction>
</comment>
<comment type="catalytic activity">
    <reaction evidence="2">
        <text>tetracosanoate + ATP + CoA = tetracosanoyl-CoA + AMP + diphosphate</text>
        <dbReference type="Rhea" id="RHEA:33639"/>
        <dbReference type="ChEBI" id="CHEBI:30616"/>
        <dbReference type="ChEBI" id="CHEBI:31014"/>
        <dbReference type="ChEBI" id="CHEBI:33019"/>
        <dbReference type="ChEBI" id="CHEBI:57287"/>
        <dbReference type="ChEBI" id="CHEBI:65052"/>
        <dbReference type="ChEBI" id="CHEBI:456215"/>
    </reaction>
    <physiologicalReaction direction="left-to-right" evidence="2">
        <dbReference type="Rhea" id="RHEA:33640"/>
    </physiologicalReaction>
</comment>
<comment type="subcellular location">
    <subcellularLocation>
        <location evidence="1">Cytoplasm</location>
    </subcellularLocation>
</comment>
<comment type="similarity">
    <text evidence="4">Belongs to the ATP-dependent AMP-binding enzyme family. Bubblegum subfamily.</text>
</comment>
<comment type="sequence caution" evidence="4">
    <conflict type="erroneous initiation">
        <sequence resource="EMBL-CDS" id="CAG31676"/>
    </conflict>
</comment>
<organism>
    <name type="scientific">Gallus gallus</name>
    <name type="common">Chicken</name>
    <dbReference type="NCBI Taxonomy" id="9031"/>
    <lineage>
        <taxon>Eukaryota</taxon>
        <taxon>Metazoa</taxon>
        <taxon>Chordata</taxon>
        <taxon>Craniata</taxon>
        <taxon>Vertebrata</taxon>
        <taxon>Euteleostomi</taxon>
        <taxon>Archelosauria</taxon>
        <taxon>Archosauria</taxon>
        <taxon>Dinosauria</taxon>
        <taxon>Saurischia</taxon>
        <taxon>Theropoda</taxon>
        <taxon>Coelurosauria</taxon>
        <taxon>Aves</taxon>
        <taxon>Neognathae</taxon>
        <taxon>Galloanserae</taxon>
        <taxon>Galliformes</taxon>
        <taxon>Phasianidae</taxon>
        <taxon>Phasianinae</taxon>
        <taxon>Gallus</taxon>
    </lineage>
</organism>